<protein>
    <recommendedName>
        <fullName evidence="4">Transcription factor MYB92</fullName>
    </recommendedName>
    <alternativeName>
        <fullName evidence="4">Myb-related protein 92</fullName>
        <shortName evidence="4">AtMYB92</shortName>
    </alternativeName>
</protein>
<accession>Q9SBF3</accession>
<keyword id="KW-0238">DNA-binding</keyword>
<keyword id="KW-0539">Nucleus</keyword>
<keyword id="KW-1185">Reference proteome</keyword>
<keyword id="KW-0677">Repeat</keyword>
<keyword id="KW-0804">Transcription</keyword>
<keyword id="KW-0805">Transcription regulation</keyword>
<organism>
    <name type="scientific">Arabidopsis thaliana</name>
    <name type="common">Mouse-ear cress</name>
    <dbReference type="NCBI Taxonomy" id="3702"/>
    <lineage>
        <taxon>Eukaryota</taxon>
        <taxon>Viridiplantae</taxon>
        <taxon>Streptophyta</taxon>
        <taxon>Embryophyta</taxon>
        <taxon>Tracheophyta</taxon>
        <taxon>Spermatophyta</taxon>
        <taxon>Magnoliopsida</taxon>
        <taxon>eudicotyledons</taxon>
        <taxon>Gunneridae</taxon>
        <taxon>Pentapetalae</taxon>
        <taxon>rosids</taxon>
        <taxon>malvids</taxon>
        <taxon>Brassicales</taxon>
        <taxon>Brassicaceae</taxon>
        <taxon>Camelineae</taxon>
        <taxon>Arabidopsis</taxon>
    </lineage>
</organism>
<evidence type="ECO:0000250" key="1">
    <source>
        <dbReference type="UniProtKB" id="Q9M2D9"/>
    </source>
</evidence>
<evidence type="ECO:0000255" key="2">
    <source>
        <dbReference type="PROSITE-ProRule" id="PRU00625"/>
    </source>
</evidence>
<evidence type="ECO:0000269" key="3">
    <source>
    </source>
</evidence>
<evidence type="ECO:0000303" key="4">
    <source>
    </source>
</evidence>
<evidence type="ECO:0000312" key="5">
    <source>
        <dbReference type="Araport" id="AT5G10280"/>
    </source>
</evidence>
<evidence type="ECO:0000312" key="6">
    <source>
        <dbReference type="EMBL" id="CAB96684.1"/>
    </source>
</evidence>
<proteinExistence type="evidence at protein level"/>
<reference key="1">
    <citation type="journal article" date="1998" name="Plant J.">
        <title>Towards functional characterisation of the members of the R2R3-MYB gene family from Arabidopsis thaliana.</title>
        <authorList>
            <person name="Kranz H.D."/>
            <person name="Denekamp M."/>
            <person name="Greco R."/>
            <person name="Jin H.-L."/>
            <person name="Leyva A."/>
            <person name="Meissner R.C."/>
            <person name="Petroni K."/>
            <person name="Urzainqui A."/>
            <person name="Bevan M."/>
            <person name="Martin C."/>
            <person name="Smeekens S."/>
            <person name="Tonelli C."/>
            <person name="Paz-Ares J."/>
            <person name="Weisshaar B."/>
        </authorList>
    </citation>
    <scope>NUCLEOTIDE SEQUENCE [MRNA]</scope>
    <scope>NOMENCLATURE</scope>
    <source>
        <strain>cv. Columbia</strain>
    </source>
</reference>
<reference key="2">
    <citation type="submission" date="2004-01" db="EMBL/GenBank/DDBJ databases">
        <title>The MYB transcription factor family in Arabidopsis: A genome-wide cloning and expression pattern analysis.</title>
        <authorList>
            <person name="Qu L."/>
            <person name="Gu H."/>
        </authorList>
    </citation>
    <scope>NUCLEOTIDE SEQUENCE [MRNA]</scope>
</reference>
<reference key="3">
    <citation type="journal article" date="2000" name="Nature">
        <title>Sequence and analysis of chromosome 5 of the plant Arabidopsis thaliana.</title>
        <authorList>
            <person name="Tabata S."/>
            <person name="Kaneko T."/>
            <person name="Nakamura Y."/>
            <person name="Kotani H."/>
            <person name="Kato T."/>
            <person name="Asamizu E."/>
            <person name="Miyajima N."/>
            <person name="Sasamoto S."/>
            <person name="Kimura T."/>
            <person name="Hosouchi T."/>
            <person name="Kawashima K."/>
            <person name="Kohara M."/>
            <person name="Matsumoto M."/>
            <person name="Matsuno A."/>
            <person name="Muraki A."/>
            <person name="Nakayama S."/>
            <person name="Nakazaki N."/>
            <person name="Naruo K."/>
            <person name="Okumura S."/>
            <person name="Shinpo S."/>
            <person name="Takeuchi C."/>
            <person name="Wada T."/>
            <person name="Watanabe A."/>
            <person name="Yamada M."/>
            <person name="Yasuda M."/>
            <person name="Sato S."/>
            <person name="de la Bastide M."/>
            <person name="Huang E."/>
            <person name="Spiegel L."/>
            <person name="Gnoj L."/>
            <person name="O'Shaughnessy A."/>
            <person name="Preston R."/>
            <person name="Habermann K."/>
            <person name="Murray J."/>
            <person name="Johnson D."/>
            <person name="Rohlfing T."/>
            <person name="Nelson J."/>
            <person name="Stoneking T."/>
            <person name="Pepin K."/>
            <person name="Spieth J."/>
            <person name="Sekhon M."/>
            <person name="Armstrong J."/>
            <person name="Becker M."/>
            <person name="Belter E."/>
            <person name="Cordum H."/>
            <person name="Cordes M."/>
            <person name="Courtney L."/>
            <person name="Courtney W."/>
            <person name="Dante M."/>
            <person name="Du H."/>
            <person name="Edwards J."/>
            <person name="Fryman J."/>
            <person name="Haakensen B."/>
            <person name="Lamar E."/>
            <person name="Latreille P."/>
            <person name="Leonard S."/>
            <person name="Meyer R."/>
            <person name="Mulvaney E."/>
            <person name="Ozersky P."/>
            <person name="Riley A."/>
            <person name="Strowmatt C."/>
            <person name="Wagner-McPherson C."/>
            <person name="Wollam A."/>
            <person name="Yoakum M."/>
            <person name="Bell M."/>
            <person name="Dedhia N."/>
            <person name="Parnell L."/>
            <person name="Shah R."/>
            <person name="Rodriguez M."/>
            <person name="Hoon See L."/>
            <person name="Vil D."/>
            <person name="Baker J."/>
            <person name="Kirchoff K."/>
            <person name="Toth K."/>
            <person name="King L."/>
            <person name="Bahret A."/>
            <person name="Miller B."/>
            <person name="Marra M.A."/>
            <person name="Martienssen R."/>
            <person name="McCombie W.R."/>
            <person name="Wilson R.K."/>
            <person name="Murphy G."/>
            <person name="Bancroft I."/>
            <person name="Volckaert G."/>
            <person name="Wambutt R."/>
            <person name="Duesterhoeft A."/>
            <person name="Stiekema W."/>
            <person name="Pohl T."/>
            <person name="Entian K.-D."/>
            <person name="Terryn N."/>
            <person name="Hartley N."/>
            <person name="Bent E."/>
            <person name="Johnson S."/>
            <person name="Langham S.-A."/>
            <person name="McCullagh B."/>
            <person name="Robben J."/>
            <person name="Grymonprez B."/>
            <person name="Zimmermann W."/>
            <person name="Ramsperger U."/>
            <person name="Wedler H."/>
            <person name="Balke K."/>
            <person name="Wedler E."/>
            <person name="Peters S."/>
            <person name="van Staveren M."/>
            <person name="Dirkse W."/>
            <person name="Mooijman P."/>
            <person name="Klein Lankhorst R."/>
            <person name="Weitzenegger T."/>
            <person name="Bothe G."/>
            <person name="Rose M."/>
            <person name="Hauf J."/>
            <person name="Berneiser S."/>
            <person name="Hempel S."/>
            <person name="Feldpausch M."/>
            <person name="Lamberth S."/>
            <person name="Villarroel R."/>
            <person name="Gielen J."/>
            <person name="Ardiles W."/>
            <person name="Bents O."/>
            <person name="Lemcke K."/>
            <person name="Kolesov G."/>
            <person name="Mayer K.F.X."/>
            <person name="Rudd S."/>
            <person name="Schoof H."/>
            <person name="Schueller C."/>
            <person name="Zaccaria P."/>
            <person name="Mewes H.-W."/>
            <person name="Bevan M."/>
            <person name="Fransz P.F."/>
        </authorList>
    </citation>
    <scope>NUCLEOTIDE SEQUENCE [LARGE SCALE GENOMIC DNA]</scope>
    <source>
        <strain>cv. Columbia</strain>
    </source>
</reference>
<reference key="4">
    <citation type="journal article" date="2017" name="Plant J.">
        <title>Araport11: a complete reannotation of the Arabidopsis thaliana reference genome.</title>
        <authorList>
            <person name="Cheng C.Y."/>
            <person name="Krishnakumar V."/>
            <person name="Chan A.P."/>
            <person name="Thibaud-Nissen F."/>
            <person name="Schobel S."/>
            <person name="Town C.D."/>
        </authorList>
    </citation>
    <scope>GENOME REANNOTATION</scope>
    <source>
        <strain>cv. Columbia</strain>
    </source>
</reference>
<reference key="5">
    <citation type="journal article" date="2003" name="Science">
        <title>Empirical analysis of transcriptional activity in the Arabidopsis genome.</title>
        <authorList>
            <person name="Yamada K."/>
            <person name="Lim J."/>
            <person name="Dale J.M."/>
            <person name="Chen H."/>
            <person name="Shinn P."/>
            <person name="Palm C.J."/>
            <person name="Southwick A.M."/>
            <person name="Wu H.C."/>
            <person name="Kim C.J."/>
            <person name="Nguyen M."/>
            <person name="Pham P.K."/>
            <person name="Cheuk R.F."/>
            <person name="Karlin-Newmann G."/>
            <person name="Liu S.X."/>
            <person name="Lam B."/>
            <person name="Sakano H."/>
            <person name="Wu T."/>
            <person name="Yu G."/>
            <person name="Miranda M."/>
            <person name="Quach H.L."/>
            <person name="Tripp M."/>
            <person name="Chang C.H."/>
            <person name="Lee J.M."/>
            <person name="Toriumi M.J."/>
            <person name="Chan M.M."/>
            <person name="Tang C.C."/>
            <person name="Onodera C.S."/>
            <person name="Deng J.M."/>
            <person name="Akiyama K."/>
            <person name="Ansari Y."/>
            <person name="Arakawa T."/>
            <person name="Banh J."/>
            <person name="Banno F."/>
            <person name="Bowser L."/>
            <person name="Brooks S.Y."/>
            <person name="Carninci P."/>
            <person name="Chao Q."/>
            <person name="Choy N."/>
            <person name="Enju A."/>
            <person name="Goldsmith A.D."/>
            <person name="Gurjal M."/>
            <person name="Hansen N.F."/>
            <person name="Hayashizaki Y."/>
            <person name="Johnson-Hopson C."/>
            <person name="Hsuan V.W."/>
            <person name="Iida K."/>
            <person name="Karnes M."/>
            <person name="Khan S."/>
            <person name="Koesema E."/>
            <person name="Ishida J."/>
            <person name="Jiang P.X."/>
            <person name="Jones T."/>
            <person name="Kawai J."/>
            <person name="Kamiya A."/>
            <person name="Meyers C."/>
            <person name="Nakajima M."/>
            <person name="Narusaka M."/>
            <person name="Seki M."/>
            <person name="Sakurai T."/>
            <person name="Satou M."/>
            <person name="Tamse R."/>
            <person name="Vaysberg M."/>
            <person name="Wallender E.K."/>
            <person name="Wong C."/>
            <person name="Yamamura Y."/>
            <person name="Yuan S."/>
            <person name="Shinozaki K."/>
            <person name="Davis R.W."/>
            <person name="Theologis A."/>
            <person name="Ecker J.R."/>
        </authorList>
    </citation>
    <scope>NUCLEOTIDE SEQUENCE [LARGE SCALE MRNA]</scope>
    <source>
        <strain>cv. Columbia</strain>
    </source>
</reference>
<reference key="6">
    <citation type="journal article" date="2014" name="New Phytol.">
        <title>AtMYB93 is a novel negative regulator of lateral root development in Arabidopsis.</title>
        <authorList>
            <person name="Gibbs D.J."/>
            <person name="Voss U."/>
            <person name="Harding S.A."/>
            <person name="Fannon J."/>
            <person name="Moody L.A."/>
            <person name="Yamada E."/>
            <person name="Swarup K."/>
            <person name="Nibau C."/>
            <person name="Bassel G.W."/>
            <person name="Choudhary A."/>
            <person name="Lavenus J."/>
            <person name="Bradshaw S.J."/>
            <person name="Stekel D.J."/>
            <person name="Bennett M.J."/>
            <person name="Coates J.C."/>
        </authorList>
    </citation>
    <scope>INTERACTION WITH FBX5</scope>
    <scope>TISSUE SPECIFICITY</scope>
    <scope>INDUCTION BY GRAVITY</scope>
</reference>
<comment type="function">
    <text evidence="1">Probable transcription factor.</text>
</comment>
<comment type="subunit">
    <text evidence="3">Interacts with FBX5.</text>
</comment>
<comment type="subcellular location">
    <subcellularLocation>
        <location evidence="2">Nucleus</location>
    </subcellularLocation>
</comment>
<comment type="tissue specificity">
    <text evidence="3">Highly expressed in roots and at lower levels in stems, flowers and siliques.</text>
</comment>
<comment type="induction">
    <text evidence="3">Induced by gravity in roots.</text>
</comment>
<gene>
    <name evidence="4" type="primary">MYB92</name>
    <name evidence="5" type="ordered locus">At5g10280</name>
    <name evidence="6" type="ORF">F18D22_50</name>
</gene>
<feature type="chain" id="PRO_0000442926" description="Transcription factor MYB92">
    <location>
        <begin position="1"/>
        <end position="334"/>
    </location>
</feature>
<feature type="domain" description="HTH myb-type 1" evidence="2">
    <location>
        <begin position="9"/>
        <end position="61"/>
    </location>
</feature>
<feature type="domain" description="HTH myb-type 2" evidence="2">
    <location>
        <begin position="62"/>
        <end position="116"/>
    </location>
</feature>
<feature type="DNA-binding region" description="H-T-H motif" evidence="2">
    <location>
        <begin position="37"/>
        <end position="61"/>
    </location>
</feature>
<feature type="DNA-binding region" description="H-T-H motif" evidence="2">
    <location>
        <begin position="89"/>
        <end position="112"/>
    </location>
</feature>
<dbReference type="EMBL" id="AF062916">
    <property type="protein sequence ID" value="AAC83638.1"/>
    <property type="molecule type" value="mRNA"/>
</dbReference>
<dbReference type="EMBL" id="AY519619">
    <property type="protein sequence ID" value="AAS10089.1"/>
    <property type="molecule type" value="mRNA"/>
</dbReference>
<dbReference type="EMBL" id="AL360334">
    <property type="protein sequence ID" value="CAB96684.1"/>
    <property type="molecule type" value="Genomic_DNA"/>
</dbReference>
<dbReference type="EMBL" id="CP002688">
    <property type="protein sequence ID" value="AED91516.1"/>
    <property type="molecule type" value="Genomic_DNA"/>
</dbReference>
<dbReference type="EMBL" id="BT002877">
    <property type="protein sequence ID" value="AAO22694.1"/>
    <property type="molecule type" value="mRNA"/>
</dbReference>
<dbReference type="EMBL" id="BT004402">
    <property type="protein sequence ID" value="AAO42396.1"/>
    <property type="molecule type" value="mRNA"/>
</dbReference>
<dbReference type="PIR" id="T50816">
    <property type="entry name" value="T50816"/>
</dbReference>
<dbReference type="RefSeq" id="NP_196590.1">
    <property type="nucleotide sequence ID" value="NM_121066.3"/>
</dbReference>
<dbReference type="SMR" id="Q9SBF3"/>
<dbReference type="IntAct" id="Q9SBF3">
    <property type="interactions" value="2"/>
</dbReference>
<dbReference type="STRING" id="3702.Q9SBF3"/>
<dbReference type="PaxDb" id="3702-AT5G10280.1"/>
<dbReference type="DNASU" id="830892"/>
<dbReference type="EnsemblPlants" id="AT5G10280.1">
    <property type="protein sequence ID" value="AT5G10280.1"/>
    <property type="gene ID" value="AT5G10280"/>
</dbReference>
<dbReference type="GeneID" id="830892"/>
<dbReference type="Gramene" id="AT5G10280.1">
    <property type="protein sequence ID" value="AT5G10280.1"/>
    <property type="gene ID" value="AT5G10280"/>
</dbReference>
<dbReference type="KEGG" id="ath:AT5G10280"/>
<dbReference type="Araport" id="AT5G10280"/>
<dbReference type="TAIR" id="AT5G10280">
    <property type="gene designation" value="MYB92"/>
</dbReference>
<dbReference type="eggNOG" id="KOG0048">
    <property type="taxonomic scope" value="Eukaryota"/>
</dbReference>
<dbReference type="HOGENOM" id="CLU_028567_15_4_1"/>
<dbReference type="InParanoid" id="Q9SBF3"/>
<dbReference type="OMA" id="IDQEHTI"/>
<dbReference type="PhylomeDB" id="Q9SBF3"/>
<dbReference type="PRO" id="PR:Q9SBF3"/>
<dbReference type="Proteomes" id="UP000006548">
    <property type="component" value="Chromosome 5"/>
</dbReference>
<dbReference type="ExpressionAtlas" id="Q9SBF3">
    <property type="expression patterns" value="baseline and differential"/>
</dbReference>
<dbReference type="GO" id="GO:0005634">
    <property type="term" value="C:nucleus"/>
    <property type="evidence" value="ECO:0007669"/>
    <property type="project" value="UniProtKB-SubCell"/>
</dbReference>
<dbReference type="GO" id="GO:0000987">
    <property type="term" value="F:cis-regulatory region sequence-specific DNA binding"/>
    <property type="evidence" value="ECO:0000314"/>
    <property type="project" value="TAIR"/>
</dbReference>
<dbReference type="GO" id="GO:0003700">
    <property type="term" value="F:DNA-binding transcription factor activity"/>
    <property type="evidence" value="ECO:0000314"/>
    <property type="project" value="TAIR"/>
</dbReference>
<dbReference type="GO" id="GO:0000976">
    <property type="term" value="F:transcription cis-regulatory region binding"/>
    <property type="evidence" value="ECO:0000353"/>
    <property type="project" value="TAIR"/>
</dbReference>
<dbReference type="GO" id="GO:0045723">
    <property type="term" value="P:positive regulation of fatty acid biosynthetic process"/>
    <property type="evidence" value="ECO:0000315"/>
    <property type="project" value="TAIR"/>
</dbReference>
<dbReference type="GO" id="GO:0010345">
    <property type="term" value="P:suberin biosynthetic process"/>
    <property type="evidence" value="ECO:0000315"/>
    <property type="project" value="TAIR"/>
</dbReference>
<dbReference type="CDD" id="cd00167">
    <property type="entry name" value="SANT"/>
    <property type="match status" value="2"/>
</dbReference>
<dbReference type="FunFam" id="1.10.10.60:FF:000001">
    <property type="entry name" value="MYB-related transcription factor"/>
    <property type="match status" value="1"/>
</dbReference>
<dbReference type="FunFam" id="1.10.10.60:FF:000349">
    <property type="entry name" value="Transcription factor MYB39"/>
    <property type="match status" value="1"/>
</dbReference>
<dbReference type="Gene3D" id="1.10.10.60">
    <property type="entry name" value="Homeodomain-like"/>
    <property type="match status" value="2"/>
</dbReference>
<dbReference type="InterPro" id="IPR009057">
    <property type="entry name" value="Homeodomain-like_sf"/>
</dbReference>
<dbReference type="InterPro" id="IPR017930">
    <property type="entry name" value="Myb_dom"/>
</dbReference>
<dbReference type="InterPro" id="IPR015495">
    <property type="entry name" value="Myb_TF_plants"/>
</dbReference>
<dbReference type="InterPro" id="IPR001005">
    <property type="entry name" value="SANT/Myb"/>
</dbReference>
<dbReference type="PANTHER" id="PTHR47994">
    <property type="entry name" value="F14D16.11-RELATED"/>
    <property type="match status" value="1"/>
</dbReference>
<dbReference type="PANTHER" id="PTHR47994:SF5">
    <property type="entry name" value="F14D16.11-RELATED"/>
    <property type="match status" value="1"/>
</dbReference>
<dbReference type="Pfam" id="PF00249">
    <property type="entry name" value="Myb_DNA-binding"/>
    <property type="match status" value="2"/>
</dbReference>
<dbReference type="SMART" id="SM00717">
    <property type="entry name" value="SANT"/>
    <property type="match status" value="2"/>
</dbReference>
<dbReference type="SUPFAM" id="SSF46689">
    <property type="entry name" value="Homeodomain-like"/>
    <property type="match status" value="1"/>
</dbReference>
<dbReference type="PROSITE" id="PS51294">
    <property type="entry name" value="HTH_MYB"/>
    <property type="match status" value="2"/>
</dbReference>
<name>MYB92_ARATH</name>
<sequence>MGRSPISDDSGLKKGPWTPDEDEKLVNYVQKHGHSSWRALPKLAGLNRCGKSCRLRWTNYLRPDIKRGRFSPDEEQTILNLHSVLGNKWSTIANQLPGRTDNEIKNFWNTHLKKKLIQMGFDPMTHRPRTDIFSGLSQLMSLSSNLRGFVDLQQQFPIDQEHTILKLQTEMAKLQLFQYLLQPSSMSNNVNPNDFDTLSLLNSIASFKETSNNTTSNNLDLGFLGSYLQDFHSLPSLKTLNSNMEPSSVFPQNLDDNHFKFSTQRENLPVSPIWLSDPSSTTPAHVNDDLIFNQYGIEDVNSNITSSSGQESGASASAAWPDHLLDDSIFSDIP</sequence>